<protein>
    <recommendedName>
        <fullName evidence="1">NAD(P)H-quinone oxidoreductase subunit 2, chloroplastic</fullName>
        <ecNumber evidence="1">7.1.1.-</ecNumber>
    </recommendedName>
    <alternativeName>
        <fullName evidence="1">NAD(P)H dehydrogenase, subunit 2</fullName>
    </alternativeName>
    <alternativeName>
        <fullName evidence="1">NADH-plastoquinone oxidoreductase subunit 2</fullName>
    </alternativeName>
</protein>
<sequence length="511" mass="56376">MEFKDLISSLNLIRLLPEGIVTILLVFILLIDLTFQKRVLSWLLYIPLVGLVCSMVVLLRQWGSQDTLSFLGSFQGDSLSIAFRFFILLSAVLCILLSKEYVERSRTALTEFFVLLLTAVIGGMLLSGANDLIMIFLSLETLGLSSYLLTGYMKKDLRSNEAAIKYLLIGAASSSILLYGLSLLYGLSGGAIEISTIAKNIVDKGLSQSFASWVALIFITVGIGFKVAAAPFHQWAPDVYEGSPTPVVAFLSVGSKAAGLALATRILTTLFPYLTNEWHLLFQVLASLSMILGNLIAISQTSMKRMLGYSSVSQAGFLMIGLIAGNPNGYSSMLVYMLLYIFMNLGAFACIILFGLKAGTDQIRDYAGLYRKDPFLVFCFSISLLSLGGIPPLAGFFGKLYLFWSGWQSGFYILVFIGLFTSVISIYYYLRVIKVMIVTEPQEMSIYVQRYTQRRWSITQLQPIELGIGLCVLGSVLAGVLVNPIINIAQQTVLYTPLLQQSEELMRTLTF</sequence>
<comment type="function">
    <text evidence="1">NDH shuttles electrons from NAD(P)H:plastoquinone, via FMN and iron-sulfur (Fe-S) centers, to quinones in the photosynthetic chain and possibly in a chloroplast respiratory chain. The immediate electron acceptor for the enzyme in this species is believed to be plastoquinone. Couples the redox reaction to proton translocation, and thus conserves the redox energy in a proton gradient.</text>
</comment>
<comment type="catalytic activity">
    <reaction evidence="1">
        <text>a plastoquinone + NADH + (n+1) H(+)(in) = a plastoquinol + NAD(+) + n H(+)(out)</text>
        <dbReference type="Rhea" id="RHEA:42608"/>
        <dbReference type="Rhea" id="RHEA-COMP:9561"/>
        <dbReference type="Rhea" id="RHEA-COMP:9562"/>
        <dbReference type="ChEBI" id="CHEBI:15378"/>
        <dbReference type="ChEBI" id="CHEBI:17757"/>
        <dbReference type="ChEBI" id="CHEBI:57540"/>
        <dbReference type="ChEBI" id="CHEBI:57945"/>
        <dbReference type="ChEBI" id="CHEBI:62192"/>
    </reaction>
</comment>
<comment type="catalytic activity">
    <reaction evidence="1">
        <text>a plastoquinone + NADPH + (n+1) H(+)(in) = a plastoquinol + NADP(+) + n H(+)(out)</text>
        <dbReference type="Rhea" id="RHEA:42612"/>
        <dbReference type="Rhea" id="RHEA-COMP:9561"/>
        <dbReference type="Rhea" id="RHEA-COMP:9562"/>
        <dbReference type="ChEBI" id="CHEBI:15378"/>
        <dbReference type="ChEBI" id="CHEBI:17757"/>
        <dbReference type="ChEBI" id="CHEBI:57783"/>
        <dbReference type="ChEBI" id="CHEBI:58349"/>
        <dbReference type="ChEBI" id="CHEBI:62192"/>
    </reaction>
</comment>
<comment type="subunit">
    <text evidence="1">NDH is composed of at least 16 different subunits, 5 of which are encoded in the nucleus.</text>
</comment>
<comment type="subcellular location">
    <subcellularLocation>
        <location evidence="1">Plastid</location>
        <location evidence="1">Chloroplast thylakoid membrane</location>
        <topology evidence="1">Multi-pass membrane protein</topology>
    </subcellularLocation>
</comment>
<comment type="similarity">
    <text evidence="1">Belongs to the complex I subunit 2 family.</text>
</comment>
<gene>
    <name evidence="1" type="primary">ndhB</name>
</gene>
<accession>Q19V78</accession>
<keyword id="KW-0150">Chloroplast</keyword>
<keyword id="KW-0472">Membrane</keyword>
<keyword id="KW-0520">NAD</keyword>
<keyword id="KW-0521">NADP</keyword>
<keyword id="KW-0934">Plastid</keyword>
<keyword id="KW-0618">Plastoquinone</keyword>
<keyword id="KW-0874">Quinone</keyword>
<keyword id="KW-0793">Thylakoid</keyword>
<keyword id="KW-1278">Translocase</keyword>
<keyword id="KW-0812">Transmembrane</keyword>
<keyword id="KW-1133">Transmembrane helix</keyword>
<keyword id="KW-0813">Transport</keyword>
<feature type="chain" id="PRO_0000344264" description="NAD(P)H-quinone oxidoreductase subunit 2, chloroplastic">
    <location>
        <begin position="1"/>
        <end position="511"/>
    </location>
</feature>
<feature type="transmembrane region" description="Helical" evidence="1">
    <location>
        <begin position="15"/>
        <end position="35"/>
    </location>
</feature>
<feature type="transmembrane region" description="Helical" evidence="1">
    <location>
        <begin position="39"/>
        <end position="59"/>
    </location>
</feature>
<feature type="transmembrane region" description="Helical" evidence="1">
    <location>
        <begin position="78"/>
        <end position="98"/>
    </location>
</feature>
<feature type="transmembrane region" description="Helical" evidence="1">
    <location>
        <begin position="108"/>
        <end position="128"/>
    </location>
</feature>
<feature type="transmembrane region" description="Helical" evidence="1">
    <location>
        <begin position="132"/>
        <end position="152"/>
    </location>
</feature>
<feature type="transmembrane region" description="Helical" evidence="1">
    <location>
        <begin position="167"/>
        <end position="187"/>
    </location>
</feature>
<feature type="transmembrane region" description="Helical" evidence="1">
    <location>
        <begin position="210"/>
        <end position="230"/>
    </location>
</feature>
<feature type="transmembrane region" description="Helical" evidence="1">
    <location>
        <begin position="244"/>
        <end position="264"/>
    </location>
</feature>
<feature type="transmembrane region" description="Helical" evidence="1">
    <location>
        <begin position="278"/>
        <end position="298"/>
    </location>
</feature>
<feature type="transmembrane region" description="Helical" evidence="1">
    <location>
        <begin position="306"/>
        <end position="326"/>
    </location>
</feature>
<feature type="transmembrane region" description="Helical" evidence="1">
    <location>
        <begin position="334"/>
        <end position="354"/>
    </location>
</feature>
<feature type="transmembrane region" description="Helical" evidence="1">
    <location>
        <begin position="377"/>
        <end position="397"/>
    </location>
</feature>
<feature type="transmembrane region" description="Helical" evidence="1">
    <location>
        <begin position="410"/>
        <end position="430"/>
    </location>
</feature>
<feature type="transmembrane region" description="Helical" evidence="1">
    <location>
        <begin position="466"/>
        <end position="486"/>
    </location>
</feature>
<name>NU2C_CHLAT</name>
<reference key="1">
    <citation type="journal article" date="2007" name="BMC Biol.">
        <title>A clade uniting the green algae Mesostigma viride and Chlorokybus atmophyticus represents the deepest branch of the Streptophyta in chloroplast genome-based phylogenies.</title>
        <authorList>
            <person name="Lemieux C."/>
            <person name="Otis C."/>
            <person name="Turmel M."/>
        </authorList>
    </citation>
    <scope>NUCLEOTIDE SEQUENCE [LARGE SCALE GENOMIC DNA]</scope>
    <source>
        <strain>SAG 48.80</strain>
    </source>
</reference>
<geneLocation type="chloroplast"/>
<dbReference type="EC" id="7.1.1.-" evidence="1"/>
<dbReference type="EMBL" id="DQ422812">
    <property type="protein sequence ID" value="ABD62190.2"/>
    <property type="molecule type" value="Genomic_DNA"/>
</dbReference>
<dbReference type="RefSeq" id="YP_001019129.1">
    <property type="nucleotide sequence ID" value="NC_008822.1"/>
</dbReference>
<dbReference type="SMR" id="Q19V78"/>
<dbReference type="GeneID" id="4783248"/>
<dbReference type="GO" id="GO:0009535">
    <property type="term" value="C:chloroplast thylakoid membrane"/>
    <property type="evidence" value="ECO:0007669"/>
    <property type="project" value="UniProtKB-SubCell"/>
</dbReference>
<dbReference type="GO" id="GO:0008137">
    <property type="term" value="F:NADH dehydrogenase (ubiquinone) activity"/>
    <property type="evidence" value="ECO:0007669"/>
    <property type="project" value="InterPro"/>
</dbReference>
<dbReference type="GO" id="GO:0048038">
    <property type="term" value="F:quinone binding"/>
    <property type="evidence" value="ECO:0007669"/>
    <property type="project" value="UniProtKB-KW"/>
</dbReference>
<dbReference type="GO" id="GO:0042773">
    <property type="term" value="P:ATP synthesis coupled electron transport"/>
    <property type="evidence" value="ECO:0007669"/>
    <property type="project" value="InterPro"/>
</dbReference>
<dbReference type="GO" id="GO:0019684">
    <property type="term" value="P:photosynthesis, light reaction"/>
    <property type="evidence" value="ECO:0007669"/>
    <property type="project" value="UniProtKB-UniRule"/>
</dbReference>
<dbReference type="HAMAP" id="MF_00445">
    <property type="entry name" value="NDH1_NuoN_1"/>
    <property type="match status" value="1"/>
</dbReference>
<dbReference type="InterPro" id="IPR010096">
    <property type="entry name" value="NADH-Q_OxRdtase_suN/2"/>
</dbReference>
<dbReference type="InterPro" id="IPR001750">
    <property type="entry name" value="ND/Mrp_TM"/>
</dbReference>
<dbReference type="InterPro" id="IPR045693">
    <property type="entry name" value="Ndh2_N"/>
</dbReference>
<dbReference type="NCBIfam" id="TIGR01770">
    <property type="entry name" value="NDH_I_N"/>
    <property type="match status" value="1"/>
</dbReference>
<dbReference type="NCBIfam" id="NF002701">
    <property type="entry name" value="PRK02504.1"/>
    <property type="match status" value="1"/>
</dbReference>
<dbReference type="PANTHER" id="PTHR22773">
    <property type="entry name" value="NADH DEHYDROGENASE"/>
    <property type="match status" value="1"/>
</dbReference>
<dbReference type="Pfam" id="PF19530">
    <property type="entry name" value="Ndh2_N"/>
    <property type="match status" value="1"/>
</dbReference>
<dbReference type="Pfam" id="PF00361">
    <property type="entry name" value="Proton_antipo_M"/>
    <property type="match status" value="1"/>
</dbReference>
<dbReference type="PRINTS" id="PR01434">
    <property type="entry name" value="NADHDHGNASE5"/>
</dbReference>
<evidence type="ECO:0000255" key="1">
    <source>
        <dbReference type="HAMAP-Rule" id="MF_00445"/>
    </source>
</evidence>
<organism>
    <name type="scientific">Chlorokybus atmophyticus</name>
    <name type="common">Soil alga</name>
    <dbReference type="NCBI Taxonomy" id="3144"/>
    <lineage>
        <taxon>Eukaryota</taxon>
        <taxon>Viridiplantae</taxon>
        <taxon>Streptophyta</taxon>
        <taxon>Chlorokybophyceae</taxon>
        <taxon>Chlorokybales</taxon>
        <taxon>Chlorokybaceae</taxon>
        <taxon>Chlorokybus</taxon>
    </lineage>
</organism>
<proteinExistence type="inferred from homology"/>